<protein>
    <recommendedName>
        <fullName evidence="1">Succinate--CoA ligase [ADP-forming] subunit beta</fullName>
        <ecNumber evidence="1">6.2.1.5</ecNumber>
    </recommendedName>
    <alternativeName>
        <fullName evidence="1">Succinyl-CoA synthetase subunit beta</fullName>
        <shortName evidence="1">SCS-beta</shortName>
    </alternativeName>
</protein>
<keyword id="KW-0067">ATP-binding</keyword>
<keyword id="KW-0436">Ligase</keyword>
<keyword id="KW-0460">Magnesium</keyword>
<keyword id="KW-0479">Metal-binding</keyword>
<keyword id="KW-0547">Nucleotide-binding</keyword>
<keyword id="KW-1185">Reference proteome</keyword>
<keyword id="KW-0816">Tricarboxylic acid cycle</keyword>
<comment type="function">
    <text evidence="1">Succinyl-CoA synthetase functions in the citric acid cycle (TCA), coupling the hydrolysis of succinyl-CoA to the synthesis of either ATP or GTP and thus represents the only step of substrate-level phosphorylation in the TCA. The beta subunit provides nucleotide specificity of the enzyme and binds the substrate succinate, while the binding sites for coenzyme A and phosphate are found in the alpha subunit.</text>
</comment>
<comment type="catalytic activity">
    <reaction evidence="1">
        <text>succinate + ATP + CoA = succinyl-CoA + ADP + phosphate</text>
        <dbReference type="Rhea" id="RHEA:17661"/>
        <dbReference type="ChEBI" id="CHEBI:30031"/>
        <dbReference type="ChEBI" id="CHEBI:30616"/>
        <dbReference type="ChEBI" id="CHEBI:43474"/>
        <dbReference type="ChEBI" id="CHEBI:57287"/>
        <dbReference type="ChEBI" id="CHEBI:57292"/>
        <dbReference type="ChEBI" id="CHEBI:456216"/>
        <dbReference type="EC" id="6.2.1.5"/>
    </reaction>
    <physiologicalReaction direction="right-to-left" evidence="1">
        <dbReference type="Rhea" id="RHEA:17663"/>
    </physiologicalReaction>
</comment>
<comment type="catalytic activity">
    <reaction evidence="1">
        <text>GTP + succinate + CoA = succinyl-CoA + GDP + phosphate</text>
        <dbReference type="Rhea" id="RHEA:22120"/>
        <dbReference type="ChEBI" id="CHEBI:30031"/>
        <dbReference type="ChEBI" id="CHEBI:37565"/>
        <dbReference type="ChEBI" id="CHEBI:43474"/>
        <dbReference type="ChEBI" id="CHEBI:57287"/>
        <dbReference type="ChEBI" id="CHEBI:57292"/>
        <dbReference type="ChEBI" id="CHEBI:58189"/>
    </reaction>
    <physiologicalReaction direction="right-to-left" evidence="1">
        <dbReference type="Rhea" id="RHEA:22122"/>
    </physiologicalReaction>
</comment>
<comment type="cofactor">
    <cofactor evidence="1">
        <name>Mg(2+)</name>
        <dbReference type="ChEBI" id="CHEBI:18420"/>
    </cofactor>
    <text evidence="1">Binds 1 Mg(2+) ion per subunit.</text>
</comment>
<comment type="pathway">
    <text evidence="1">Carbohydrate metabolism; tricarboxylic acid cycle; succinate from succinyl-CoA (ligase route): step 1/1.</text>
</comment>
<comment type="subunit">
    <text evidence="1">Heterotetramer of two alpha and two beta subunits.</text>
</comment>
<comment type="similarity">
    <text evidence="1">Belongs to the succinate/malate CoA ligase beta subunit family.</text>
</comment>
<feature type="chain" id="PRO_0000102822" description="Succinate--CoA ligase [ADP-forming] subunit beta">
    <location>
        <begin position="1"/>
        <end position="387"/>
    </location>
</feature>
<feature type="binding site" evidence="1">
    <location>
        <position position="46"/>
    </location>
    <ligand>
        <name>ATP</name>
        <dbReference type="ChEBI" id="CHEBI:30616"/>
    </ligand>
</feature>
<feature type="binding site" evidence="1">
    <location>
        <begin position="53"/>
        <end position="55"/>
    </location>
    <ligand>
        <name>ATP</name>
        <dbReference type="ChEBI" id="CHEBI:30616"/>
    </ligand>
</feature>
<feature type="binding site" evidence="1">
    <location>
        <position position="99"/>
    </location>
    <ligand>
        <name>ATP</name>
        <dbReference type="ChEBI" id="CHEBI:30616"/>
    </ligand>
</feature>
<feature type="binding site" evidence="1">
    <location>
        <position position="102"/>
    </location>
    <ligand>
        <name>ATP</name>
        <dbReference type="ChEBI" id="CHEBI:30616"/>
    </ligand>
</feature>
<feature type="binding site" evidence="1">
    <location>
        <position position="107"/>
    </location>
    <ligand>
        <name>ATP</name>
        <dbReference type="ChEBI" id="CHEBI:30616"/>
    </ligand>
</feature>
<feature type="binding site" evidence="1">
    <location>
        <position position="199"/>
    </location>
    <ligand>
        <name>Mg(2+)</name>
        <dbReference type="ChEBI" id="CHEBI:18420"/>
    </ligand>
</feature>
<feature type="binding site" evidence="1">
    <location>
        <position position="213"/>
    </location>
    <ligand>
        <name>Mg(2+)</name>
        <dbReference type="ChEBI" id="CHEBI:18420"/>
    </ligand>
</feature>
<feature type="binding site" evidence="1">
    <location>
        <position position="264"/>
    </location>
    <ligand>
        <name>substrate</name>
        <note>ligand shared with subunit alpha</note>
    </ligand>
</feature>
<feature type="binding site" evidence="1">
    <location>
        <begin position="321"/>
        <end position="323"/>
    </location>
    <ligand>
        <name>substrate</name>
        <note>ligand shared with subunit alpha</note>
    </ligand>
</feature>
<name>SUCC_CAMJE</name>
<proteinExistence type="inferred from homology"/>
<accession>Q9PHY1</accession>
<accession>Q0PAY3</accession>
<gene>
    <name evidence="1" type="primary">sucC</name>
    <name type="ordered locus">Cj0533</name>
</gene>
<sequence>MNIHEYQAKAIFVDNGIPTLKGKVAFSVDEAVANAKELGGSVWAVKAQIHAGGRGLGGGVKIAKNLDEVKDYASKILGMNLVTHQTGPEGKLVQKLYIESGANIVKEYYLAILFNRMAEQITIIASSEGGMDIEKVAKESPEKIAKVGIDPQIGFKMFHGLEVARVLGLDKDEGKKLISMIAKLYKLYMDKDMNMLEINPLIKTAEGDFYALDAKCSFDDSALYRHPEIAELRDTTEENPAEREAAEFGLSYVKLDGDVACMVNGAGLAMATMDIINYSGAKPANFLDVGGGASPETVAKAFEIILRDKNVKVIFINIFGGIVRCDRIANGILEATKNVEVNIPIVVRLDGTNAAEAKTILDNSNLKNIKAATNLKNGAELVKSLVG</sequence>
<dbReference type="EC" id="6.2.1.5" evidence="1"/>
<dbReference type="EMBL" id="AL111168">
    <property type="protein sequence ID" value="CAL34679.1"/>
    <property type="molecule type" value="Genomic_DNA"/>
</dbReference>
<dbReference type="PIR" id="E81399">
    <property type="entry name" value="E81399"/>
</dbReference>
<dbReference type="RefSeq" id="WP_002858590.1">
    <property type="nucleotide sequence ID" value="NZ_SZUC01000002.1"/>
</dbReference>
<dbReference type="RefSeq" id="YP_002343964.1">
    <property type="nucleotide sequence ID" value="NC_002163.1"/>
</dbReference>
<dbReference type="SMR" id="Q9PHY1"/>
<dbReference type="IntAct" id="Q9PHY1">
    <property type="interactions" value="2"/>
</dbReference>
<dbReference type="STRING" id="192222.Cj0533"/>
<dbReference type="PaxDb" id="192222-Cj0533"/>
<dbReference type="EnsemblBacteria" id="CAL34679">
    <property type="protein sequence ID" value="CAL34679"/>
    <property type="gene ID" value="Cj0533"/>
</dbReference>
<dbReference type="GeneID" id="904861"/>
<dbReference type="KEGG" id="cje:Cj0533"/>
<dbReference type="PATRIC" id="fig|192222.6.peg.525"/>
<dbReference type="eggNOG" id="COG0045">
    <property type="taxonomic scope" value="Bacteria"/>
</dbReference>
<dbReference type="HOGENOM" id="CLU_037430_0_2_7"/>
<dbReference type="OrthoDB" id="9802602at2"/>
<dbReference type="UniPathway" id="UPA00223">
    <property type="reaction ID" value="UER00999"/>
</dbReference>
<dbReference type="Proteomes" id="UP000000799">
    <property type="component" value="Chromosome"/>
</dbReference>
<dbReference type="GO" id="GO:0005829">
    <property type="term" value="C:cytosol"/>
    <property type="evidence" value="ECO:0007669"/>
    <property type="project" value="TreeGrafter"/>
</dbReference>
<dbReference type="GO" id="GO:0042709">
    <property type="term" value="C:succinate-CoA ligase complex"/>
    <property type="evidence" value="ECO:0007669"/>
    <property type="project" value="TreeGrafter"/>
</dbReference>
<dbReference type="GO" id="GO:0005524">
    <property type="term" value="F:ATP binding"/>
    <property type="evidence" value="ECO:0007669"/>
    <property type="project" value="UniProtKB-UniRule"/>
</dbReference>
<dbReference type="GO" id="GO:0000287">
    <property type="term" value="F:magnesium ion binding"/>
    <property type="evidence" value="ECO:0007669"/>
    <property type="project" value="UniProtKB-UniRule"/>
</dbReference>
<dbReference type="GO" id="GO:0004775">
    <property type="term" value="F:succinate-CoA ligase (ADP-forming) activity"/>
    <property type="evidence" value="ECO:0007669"/>
    <property type="project" value="UniProtKB-UniRule"/>
</dbReference>
<dbReference type="GO" id="GO:0004776">
    <property type="term" value="F:succinate-CoA ligase (GDP-forming) activity"/>
    <property type="evidence" value="ECO:0007669"/>
    <property type="project" value="RHEA"/>
</dbReference>
<dbReference type="GO" id="GO:0006104">
    <property type="term" value="P:succinyl-CoA metabolic process"/>
    <property type="evidence" value="ECO:0007669"/>
    <property type="project" value="TreeGrafter"/>
</dbReference>
<dbReference type="GO" id="GO:0006099">
    <property type="term" value="P:tricarboxylic acid cycle"/>
    <property type="evidence" value="ECO:0007669"/>
    <property type="project" value="UniProtKB-UniRule"/>
</dbReference>
<dbReference type="FunFam" id="3.30.1490.20:FF:000002">
    <property type="entry name" value="Succinate--CoA ligase [ADP-forming] subunit beta"/>
    <property type="match status" value="1"/>
</dbReference>
<dbReference type="FunFam" id="3.30.470.20:FF:000002">
    <property type="entry name" value="Succinate--CoA ligase [ADP-forming] subunit beta"/>
    <property type="match status" value="1"/>
</dbReference>
<dbReference type="FunFam" id="3.40.50.261:FF:000001">
    <property type="entry name" value="Succinate--CoA ligase [ADP-forming] subunit beta"/>
    <property type="match status" value="1"/>
</dbReference>
<dbReference type="Gene3D" id="3.30.1490.20">
    <property type="entry name" value="ATP-grasp fold, A domain"/>
    <property type="match status" value="1"/>
</dbReference>
<dbReference type="Gene3D" id="3.30.470.20">
    <property type="entry name" value="ATP-grasp fold, B domain"/>
    <property type="match status" value="1"/>
</dbReference>
<dbReference type="Gene3D" id="3.40.50.261">
    <property type="entry name" value="Succinyl-CoA synthetase domains"/>
    <property type="match status" value="1"/>
</dbReference>
<dbReference type="HAMAP" id="MF_00558">
    <property type="entry name" value="Succ_CoA_beta"/>
    <property type="match status" value="1"/>
</dbReference>
<dbReference type="InterPro" id="IPR013650">
    <property type="entry name" value="ATP-grasp_succ-CoA_synth-type"/>
</dbReference>
<dbReference type="InterPro" id="IPR013815">
    <property type="entry name" value="ATP_grasp_subdomain_1"/>
</dbReference>
<dbReference type="InterPro" id="IPR017866">
    <property type="entry name" value="Succ-CoA_synthase_bsu_CS"/>
</dbReference>
<dbReference type="InterPro" id="IPR005811">
    <property type="entry name" value="SUCC_ACL_C"/>
</dbReference>
<dbReference type="InterPro" id="IPR005809">
    <property type="entry name" value="Succ_CoA_ligase-like_bsu"/>
</dbReference>
<dbReference type="InterPro" id="IPR016102">
    <property type="entry name" value="Succinyl-CoA_synth-like"/>
</dbReference>
<dbReference type="NCBIfam" id="NF001913">
    <property type="entry name" value="PRK00696.1"/>
    <property type="match status" value="1"/>
</dbReference>
<dbReference type="NCBIfam" id="TIGR01016">
    <property type="entry name" value="sucCoAbeta"/>
    <property type="match status" value="1"/>
</dbReference>
<dbReference type="PANTHER" id="PTHR11815:SF10">
    <property type="entry name" value="SUCCINATE--COA LIGASE [GDP-FORMING] SUBUNIT BETA, MITOCHONDRIAL"/>
    <property type="match status" value="1"/>
</dbReference>
<dbReference type="PANTHER" id="PTHR11815">
    <property type="entry name" value="SUCCINYL-COA SYNTHETASE BETA CHAIN"/>
    <property type="match status" value="1"/>
</dbReference>
<dbReference type="Pfam" id="PF08442">
    <property type="entry name" value="ATP-grasp_2"/>
    <property type="match status" value="1"/>
</dbReference>
<dbReference type="Pfam" id="PF00549">
    <property type="entry name" value="Ligase_CoA"/>
    <property type="match status" value="1"/>
</dbReference>
<dbReference type="PIRSF" id="PIRSF001554">
    <property type="entry name" value="SucCS_beta"/>
    <property type="match status" value="1"/>
</dbReference>
<dbReference type="SUPFAM" id="SSF56059">
    <property type="entry name" value="Glutathione synthetase ATP-binding domain-like"/>
    <property type="match status" value="1"/>
</dbReference>
<dbReference type="SUPFAM" id="SSF52210">
    <property type="entry name" value="Succinyl-CoA synthetase domains"/>
    <property type="match status" value="1"/>
</dbReference>
<dbReference type="PROSITE" id="PS01217">
    <property type="entry name" value="SUCCINYL_COA_LIG_3"/>
    <property type="match status" value="1"/>
</dbReference>
<organism>
    <name type="scientific">Campylobacter jejuni subsp. jejuni serotype O:2 (strain ATCC 700819 / NCTC 11168)</name>
    <dbReference type="NCBI Taxonomy" id="192222"/>
    <lineage>
        <taxon>Bacteria</taxon>
        <taxon>Pseudomonadati</taxon>
        <taxon>Campylobacterota</taxon>
        <taxon>Epsilonproteobacteria</taxon>
        <taxon>Campylobacterales</taxon>
        <taxon>Campylobacteraceae</taxon>
        <taxon>Campylobacter</taxon>
    </lineage>
</organism>
<reference key="1">
    <citation type="journal article" date="2000" name="Nature">
        <title>The genome sequence of the food-borne pathogen Campylobacter jejuni reveals hypervariable sequences.</title>
        <authorList>
            <person name="Parkhill J."/>
            <person name="Wren B.W."/>
            <person name="Mungall K.L."/>
            <person name="Ketley J.M."/>
            <person name="Churcher C.M."/>
            <person name="Basham D."/>
            <person name="Chillingworth T."/>
            <person name="Davies R.M."/>
            <person name="Feltwell T."/>
            <person name="Holroyd S."/>
            <person name="Jagels K."/>
            <person name="Karlyshev A.V."/>
            <person name="Moule S."/>
            <person name="Pallen M.J."/>
            <person name="Penn C.W."/>
            <person name="Quail M.A."/>
            <person name="Rajandream M.A."/>
            <person name="Rutherford K.M."/>
            <person name="van Vliet A.H.M."/>
            <person name="Whitehead S."/>
            <person name="Barrell B.G."/>
        </authorList>
    </citation>
    <scope>NUCLEOTIDE SEQUENCE [LARGE SCALE GENOMIC DNA]</scope>
    <source>
        <strain>ATCC 700819 / NCTC 11168</strain>
    </source>
</reference>
<evidence type="ECO:0000255" key="1">
    <source>
        <dbReference type="HAMAP-Rule" id="MF_00558"/>
    </source>
</evidence>